<protein>
    <recommendedName>
        <fullName>Flagellin D</fullName>
    </recommendedName>
</protein>
<feature type="initiator methionine" description="Removed" evidence="2">
    <location>
        <position position="1"/>
    </location>
</feature>
<feature type="chain" id="PRO_0000182651" description="Flagellin D">
    <location>
        <begin position="2"/>
        <end position="377"/>
    </location>
</feature>
<feature type="coiled-coil region" evidence="1">
    <location>
        <begin position="103"/>
        <end position="129"/>
    </location>
</feature>
<feature type="coiled-coil region" evidence="1">
    <location>
        <begin position="310"/>
        <end position="339"/>
    </location>
</feature>
<feature type="sequence conflict" description="In Ref. 3; AA sequence." evidence="3" ref="3">
    <original>S</original>
    <variation>R</variation>
    <location>
        <position position="28"/>
    </location>
</feature>
<accession>P0C6C6</accession>
<accession>Q56609</accession>
<accession>Q9KQ61</accession>
<keyword id="KW-0975">Bacterial flagellum</keyword>
<keyword id="KW-0175">Coiled coil</keyword>
<keyword id="KW-0903">Direct protein sequencing</keyword>
<keyword id="KW-1185">Reference proteome</keyword>
<keyword id="KW-0964">Secreted</keyword>
<proteinExistence type="evidence at protein level"/>
<gene>
    <name type="primary">flaD</name>
    <name type="ordered locus">VC_2143</name>
</gene>
<comment type="function">
    <text>Flagellin is the subunit protein which polymerizes to form the filaments of bacterial flagella. FlaD is not essential for flagellar synthesis and motility.</text>
</comment>
<comment type="subunit">
    <text>Heteromer of multiple flagellin subunits including FlaA, FlaB, FlaC, FlaD and FlaE.</text>
</comment>
<comment type="subcellular location">
    <subcellularLocation>
        <location>Secreted</location>
    </subcellularLocation>
    <subcellularLocation>
        <location>Bacterial flagellum</location>
    </subcellularLocation>
</comment>
<comment type="miscellaneous">
    <text>V.cholerae is able to differentially regulate the flagellins within the flagellum maybe to produce flagella which are particularly suited for motility within a given environment.</text>
</comment>
<comment type="similarity">
    <text evidence="3">Belongs to the bacterial flagellin family.</text>
</comment>
<name>FLAD_VIBCH</name>
<organism>
    <name type="scientific">Vibrio cholerae serotype O1 (strain ATCC 39315 / El Tor Inaba N16961)</name>
    <dbReference type="NCBI Taxonomy" id="243277"/>
    <lineage>
        <taxon>Bacteria</taxon>
        <taxon>Pseudomonadati</taxon>
        <taxon>Pseudomonadota</taxon>
        <taxon>Gammaproteobacteria</taxon>
        <taxon>Vibrionales</taxon>
        <taxon>Vibrionaceae</taxon>
        <taxon>Vibrio</taxon>
    </lineage>
</organism>
<evidence type="ECO:0000255" key="1"/>
<evidence type="ECO:0000269" key="2">
    <source>
    </source>
</evidence>
<evidence type="ECO:0000305" key="3"/>
<reference key="1">
    <citation type="journal article" date="2000" name="Nature">
        <title>DNA sequence of both chromosomes of the cholera pathogen Vibrio cholerae.</title>
        <authorList>
            <person name="Heidelberg J.F."/>
            <person name="Eisen J.A."/>
            <person name="Nelson W.C."/>
            <person name="Clayton R.A."/>
            <person name="Gwinn M.L."/>
            <person name="Dodson R.J."/>
            <person name="Haft D.H."/>
            <person name="Hickey E.K."/>
            <person name="Peterson J.D."/>
            <person name="Umayam L.A."/>
            <person name="Gill S.R."/>
            <person name="Nelson K.E."/>
            <person name="Read T.D."/>
            <person name="Tettelin H."/>
            <person name="Richardson D.L."/>
            <person name="Ermolaeva M.D."/>
            <person name="Vamathevan J.J."/>
            <person name="Bass S."/>
            <person name="Qin H."/>
            <person name="Dragoi I."/>
            <person name="Sellers P."/>
            <person name="McDonald L.A."/>
            <person name="Utterback T.R."/>
            <person name="Fleischmann R.D."/>
            <person name="Nierman W.C."/>
            <person name="White O."/>
            <person name="Salzberg S.L."/>
            <person name="Smith H.O."/>
            <person name="Colwell R.R."/>
            <person name="Mekalanos J.J."/>
            <person name="Venter J.C."/>
            <person name="Fraser C.M."/>
        </authorList>
    </citation>
    <scope>NUCLEOTIDE SEQUENCE [LARGE SCALE GENOMIC DNA]</scope>
    <source>
        <strain>ATCC 39315 / El Tor Inaba N16961</strain>
    </source>
</reference>
<reference key="2">
    <citation type="journal article" date="1995" name="Mol. Microbiol.">
        <title>Use of recombinase gene fusions to identify Vibrio cholerae genes induced during infection.</title>
        <authorList>
            <person name="Camilli A."/>
            <person name="Mekalanos J.J."/>
        </authorList>
    </citation>
    <scope>NUCLEOTIDE SEQUENCE [GENOMIC DNA] OF 15-50</scope>
</reference>
<reference key="3">
    <citation type="journal article" date="1998" name="FEMS Microbiol. Lett.">
        <title>Cloning, sequencing and expression of the flagellin core protein and other genes encoding structural proteins of the Vibrio cholerae flagellum.</title>
        <authorList>
            <person name="Das M."/>
            <person name="Chopra A.K."/>
            <person name="Wood T."/>
            <person name="Peterson J.W."/>
        </authorList>
    </citation>
    <scope>PROTEIN SEQUENCE OF 2-32</scope>
    <source>
        <strain>El Tor Inaba V86</strain>
    </source>
</reference>
<dbReference type="EMBL" id="AE003852">
    <property type="protein sequence ID" value="AAF95288.1"/>
    <property type="molecule type" value="Genomic_DNA"/>
</dbReference>
<dbReference type="EMBL" id="U25820">
    <property type="protein sequence ID" value="AAC43560.1"/>
    <property type="molecule type" value="Genomic_DNA"/>
</dbReference>
<dbReference type="PIR" id="B82112">
    <property type="entry name" value="B82112"/>
</dbReference>
<dbReference type="PIR" id="S70806">
    <property type="entry name" value="S70806"/>
</dbReference>
<dbReference type="RefSeq" id="NP_231774.1">
    <property type="nucleotide sequence ID" value="NC_002505.1"/>
</dbReference>
<dbReference type="RefSeq" id="WP_000290371.1">
    <property type="nucleotide sequence ID" value="NZ_LT906614.1"/>
</dbReference>
<dbReference type="SMR" id="P0C6C6"/>
<dbReference type="STRING" id="243277.VC_2143"/>
<dbReference type="DNASU" id="2613279"/>
<dbReference type="EnsemblBacteria" id="AAF95288">
    <property type="protein sequence ID" value="AAF95288"/>
    <property type="gene ID" value="VC_2143"/>
</dbReference>
<dbReference type="KEGG" id="vch:VC_2143"/>
<dbReference type="PATRIC" id="fig|243277.26.peg.2048"/>
<dbReference type="eggNOG" id="COG1344">
    <property type="taxonomic scope" value="Bacteria"/>
</dbReference>
<dbReference type="HOGENOM" id="CLU_011142_4_0_6"/>
<dbReference type="Proteomes" id="UP000000584">
    <property type="component" value="Chromosome 1"/>
</dbReference>
<dbReference type="GO" id="GO:0009288">
    <property type="term" value="C:bacterial-type flagellum"/>
    <property type="evidence" value="ECO:0007669"/>
    <property type="project" value="UniProtKB-SubCell"/>
</dbReference>
<dbReference type="GO" id="GO:0005576">
    <property type="term" value="C:extracellular region"/>
    <property type="evidence" value="ECO:0007669"/>
    <property type="project" value="UniProtKB-SubCell"/>
</dbReference>
<dbReference type="GO" id="GO:0005198">
    <property type="term" value="F:structural molecule activity"/>
    <property type="evidence" value="ECO:0007669"/>
    <property type="project" value="InterPro"/>
</dbReference>
<dbReference type="Gene3D" id="3.30.70.2120">
    <property type="match status" value="1"/>
</dbReference>
<dbReference type="Gene3D" id="1.20.1330.10">
    <property type="entry name" value="f41 fragment of flagellin, N-terminal domain"/>
    <property type="match status" value="1"/>
</dbReference>
<dbReference type="Gene3D" id="6.10.10.10">
    <property type="entry name" value="Flagellar export chaperone, C-terminal domain"/>
    <property type="match status" value="1"/>
</dbReference>
<dbReference type="InterPro" id="IPR001492">
    <property type="entry name" value="Flagellin"/>
</dbReference>
<dbReference type="InterPro" id="IPR046358">
    <property type="entry name" value="Flagellin_C"/>
</dbReference>
<dbReference type="InterPro" id="IPR042187">
    <property type="entry name" value="Flagellin_C_sub2"/>
</dbReference>
<dbReference type="InterPro" id="IPR010810">
    <property type="entry name" value="Flagellin_hook_IN_motif"/>
</dbReference>
<dbReference type="InterPro" id="IPR001029">
    <property type="entry name" value="Flagellin_N"/>
</dbReference>
<dbReference type="NCBIfam" id="NF006466">
    <property type="entry name" value="PRK08869.1-1"/>
    <property type="match status" value="1"/>
</dbReference>
<dbReference type="NCBIfam" id="NF006468">
    <property type="entry name" value="PRK08869.1-3"/>
    <property type="match status" value="1"/>
</dbReference>
<dbReference type="PANTHER" id="PTHR42792">
    <property type="entry name" value="FLAGELLIN"/>
    <property type="match status" value="1"/>
</dbReference>
<dbReference type="PANTHER" id="PTHR42792:SF2">
    <property type="entry name" value="FLAGELLIN"/>
    <property type="match status" value="1"/>
</dbReference>
<dbReference type="Pfam" id="PF00700">
    <property type="entry name" value="Flagellin_C"/>
    <property type="match status" value="1"/>
</dbReference>
<dbReference type="Pfam" id="PF07196">
    <property type="entry name" value="Flagellin_IN"/>
    <property type="match status" value="1"/>
</dbReference>
<dbReference type="Pfam" id="PF00669">
    <property type="entry name" value="Flagellin_N"/>
    <property type="match status" value="1"/>
</dbReference>
<dbReference type="PRINTS" id="PR00207">
    <property type="entry name" value="FLAGELLIN"/>
</dbReference>
<dbReference type="SUPFAM" id="SSF64518">
    <property type="entry name" value="Phase 1 flagellin"/>
    <property type="match status" value="1"/>
</dbReference>
<sequence length="377" mass="39904">MAVNVNTNVAAMTAQRYLTGATNAQQTSMERLSSGFKINSAKDDAAGLQISNRLNVQSRGLDVAVRNANDGISIAQTAEGAMNETTNILQRMRDLSLQSANGSNSKSERVAIQEEITALNDELNRIAETTSFGGNKLLNGTFSTKSFQIGADNGEAVMLTLKDMRSDNRMMGGTSYVAAEGKDKDWKVQAGANDITFTLKDIDGNDQTITVNAKEGDDIEEVATYINGQTDMVKASVNEKGQLQIFAGNNKVTGDVAFSGGLAGALNMQAGTAETVDTIDVTSVGGAQQSVAVIDSALKYVDSHRAELGAFQNRFNHAISNLDNINENVNASKSRIKDTDFAKETTALTKSQILSQASSSVLAQAKQAPNAALSLLG</sequence>